<organism>
    <name type="scientific">Citrobacter koseri (strain ATCC BAA-895 / CDC 4225-83 / SGSC4696)</name>
    <dbReference type="NCBI Taxonomy" id="290338"/>
    <lineage>
        <taxon>Bacteria</taxon>
        <taxon>Pseudomonadati</taxon>
        <taxon>Pseudomonadota</taxon>
        <taxon>Gammaproteobacteria</taxon>
        <taxon>Enterobacterales</taxon>
        <taxon>Enterobacteriaceae</taxon>
        <taxon>Citrobacter</taxon>
    </lineage>
</organism>
<name>NANK_CITK8</name>
<protein>
    <recommendedName>
        <fullName evidence="1">N-acetylmannosamine kinase</fullName>
        <ecNumber evidence="1">2.7.1.60</ecNumber>
    </recommendedName>
    <alternativeName>
        <fullName evidence="1">ManNAc kinase</fullName>
    </alternativeName>
    <alternativeName>
        <fullName evidence="1">N-acetyl-D-mannosamine kinase</fullName>
    </alternativeName>
</protein>
<sequence length="290" mass="29798">MSTLAIDIGGTKLAAARVDDDLRIRERRELPTPASKTPDALREALKVLVEPLQTTAQRVAIASTGIIREGALLAINPHNLGGLLHFPLVPTLEDLTGLPTLAVNDAQAAAWAEYHALASDVRDMVFITVSTGVGGGVVSDGRLLTGMSGLAGHLGHTLADPQGPVCGCGRRGCVEAIASGRGIAAAAQGSLAGCDARTVFAHAAAGNEQAVRLVQHSAQVVARLIADVKATTDCQQVVIGGSVGLAEGYLAQVRHFLAQEPAVYQVALSAAHYRHDAGLLGAALLAQGDK</sequence>
<dbReference type="EC" id="2.7.1.60" evidence="1"/>
<dbReference type="EMBL" id="CP000822">
    <property type="protein sequence ID" value="ABV15675.1"/>
    <property type="molecule type" value="Genomic_DNA"/>
</dbReference>
<dbReference type="RefSeq" id="WP_012135354.1">
    <property type="nucleotide sequence ID" value="NC_009792.1"/>
</dbReference>
<dbReference type="SMR" id="A8AQB2"/>
<dbReference type="STRING" id="290338.CKO_04625"/>
<dbReference type="GeneID" id="45138159"/>
<dbReference type="KEGG" id="cko:CKO_04625"/>
<dbReference type="HOGENOM" id="CLU_036604_0_4_6"/>
<dbReference type="OrthoDB" id="8772678at2"/>
<dbReference type="UniPathway" id="UPA00629">
    <property type="reaction ID" value="UER00681"/>
</dbReference>
<dbReference type="Proteomes" id="UP000008148">
    <property type="component" value="Chromosome"/>
</dbReference>
<dbReference type="GO" id="GO:0005524">
    <property type="term" value="F:ATP binding"/>
    <property type="evidence" value="ECO:0007669"/>
    <property type="project" value="UniProtKB-UniRule"/>
</dbReference>
<dbReference type="GO" id="GO:0009384">
    <property type="term" value="F:N-acylmannosamine kinase activity"/>
    <property type="evidence" value="ECO:0007669"/>
    <property type="project" value="UniProtKB-UniRule"/>
</dbReference>
<dbReference type="GO" id="GO:0008270">
    <property type="term" value="F:zinc ion binding"/>
    <property type="evidence" value="ECO:0007669"/>
    <property type="project" value="UniProtKB-UniRule"/>
</dbReference>
<dbReference type="GO" id="GO:0019262">
    <property type="term" value="P:N-acetylneuraminate catabolic process"/>
    <property type="evidence" value="ECO:0007669"/>
    <property type="project" value="UniProtKB-UniRule"/>
</dbReference>
<dbReference type="FunFam" id="3.30.420.40:FF:000062">
    <property type="entry name" value="N-acetylmannosamine kinase"/>
    <property type="match status" value="1"/>
</dbReference>
<dbReference type="FunFam" id="3.30.420.40:FF:000063">
    <property type="entry name" value="N-acetylmannosamine kinase"/>
    <property type="match status" value="1"/>
</dbReference>
<dbReference type="Gene3D" id="3.30.420.40">
    <property type="match status" value="2"/>
</dbReference>
<dbReference type="HAMAP" id="MF_01234">
    <property type="entry name" value="ManNAc_kinase"/>
    <property type="match status" value="1"/>
</dbReference>
<dbReference type="InterPro" id="IPR043129">
    <property type="entry name" value="ATPase_NBD"/>
</dbReference>
<dbReference type="InterPro" id="IPR023945">
    <property type="entry name" value="ManNAc_kinase_bac"/>
</dbReference>
<dbReference type="InterPro" id="IPR000600">
    <property type="entry name" value="ROK"/>
</dbReference>
<dbReference type="InterPro" id="IPR049874">
    <property type="entry name" value="ROK_cs"/>
</dbReference>
<dbReference type="NCBIfam" id="NF047821">
    <property type="entry name" value="NactlManKinNanK"/>
    <property type="match status" value="1"/>
</dbReference>
<dbReference type="NCBIfam" id="NF003461">
    <property type="entry name" value="PRK05082.1"/>
    <property type="match status" value="1"/>
</dbReference>
<dbReference type="PANTHER" id="PTHR18964:SF169">
    <property type="entry name" value="N-ACETYLMANNOSAMINE KINASE"/>
    <property type="match status" value="1"/>
</dbReference>
<dbReference type="PANTHER" id="PTHR18964">
    <property type="entry name" value="ROK (REPRESSOR, ORF, KINASE) FAMILY"/>
    <property type="match status" value="1"/>
</dbReference>
<dbReference type="Pfam" id="PF00480">
    <property type="entry name" value="ROK"/>
    <property type="match status" value="1"/>
</dbReference>
<dbReference type="SUPFAM" id="SSF53067">
    <property type="entry name" value="Actin-like ATPase domain"/>
    <property type="match status" value="1"/>
</dbReference>
<dbReference type="PROSITE" id="PS01125">
    <property type="entry name" value="ROK"/>
    <property type="match status" value="1"/>
</dbReference>
<feature type="chain" id="PRO_1000066907" description="N-acetylmannosamine kinase">
    <location>
        <begin position="1"/>
        <end position="290"/>
    </location>
</feature>
<feature type="binding site" evidence="1">
    <location>
        <begin position="5"/>
        <end position="12"/>
    </location>
    <ligand>
        <name>ATP</name>
        <dbReference type="ChEBI" id="CHEBI:30616"/>
    </ligand>
</feature>
<feature type="binding site" evidence="1">
    <location>
        <begin position="132"/>
        <end position="139"/>
    </location>
    <ligand>
        <name>ATP</name>
        <dbReference type="ChEBI" id="CHEBI:30616"/>
    </ligand>
</feature>
<feature type="binding site" evidence="1">
    <location>
        <position position="156"/>
    </location>
    <ligand>
        <name>Zn(2+)</name>
        <dbReference type="ChEBI" id="CHEBI:29105"/>
    </ligand>
</feature>
<feature type="binding site" evidence="1">
    <location>
        <position position="166"/>
    </location>
    <ligand>
        <name>Zn(2+)</name>
        <dbReference type="ChEBI" id="CHEBI:29105"/>
    </ligand>
</feature>
<feature type="binding site" evidence="1">
    <location>
        <position position="168"/>
    </location>
    <ligand>
        <name>Zn(2+)</name>
        <dbReference type="ChEBI" id="CHEBI:29105"/>
    </ligand>
</feature>
<feature type="binding site" evidence="1">
    <location>
        <position position="173"/>
    </location>
    <ligand>
        <name>Zn(2+)</name>
        <dbReference type="ChEBI" id="CHEBI:29105"/>
    </ligand>
</feature>
<gene>
    <name evidence="1" type="primary">nanK</name>
    <name type="ordered locus">CKO_04625</name>
</gene>
<keyword id="KW-0067">ATP-binding</keyword>
<keyword id="KW-0119">Carbohydrate metabolism</keyword>
<keyword id="KW-0418">Kinase</keyword>
<keyword id="KW-0479">Metal-binding</keyword>
<keyword id="KW-0547">Nucleotide-binding</keyword>
<keyword id="KW-1185">Reference proteome</keyword>
<keyword id="KW-0808">Transferase</keyword>
<keyword id="KW-0862">Zinc</keyword>
<accession>A8AQB2</accession>
<proteinExistence type="inferred from homology"/>
<comment type="function">
    <text evidence="1">Catalyzes the phosphorylation of N-acetylmannosamine (ManNAc) to ManNAc-6-P.</text>
</comment>
<comment type="catalytic activity">
    <reaction evidence="1">
        <text>an N-acyl-D-mannosamine + ATP = an N-acyl-D-mannosamine 6-phosphate + ADP + H(+)</text>
        <dbReference type="Rhea" id="RHEA:23832"/>
        <dbReference type="ChEBI" id="CHEBI:15378"/>
        <dbReference type="ChEBI" id="CHEBI:16062"/>
        <dbReference type="ChEBI" id="CHEBI:30616"/>
        <dbReference type="ChEBI" id="CHEBI:57666"/>
        <dbReference type="ChEBI" id="CHEBI:456216"/>
        <dbReference type="EC" id="2.7.1.60"/>
    </reaction>
</comment>
<comment type="pathway">
    <text evidence="1">Amino-sugar metabolism; N-acetylneuraminate degradation; D-fructose 6-phosphate from N-acetylneuraminate: step 2/5.</text>
</comment>
<comment type="subunit">
    <text evidence="1">Homodimer.</text>
</comment>
<comment type="similarity">
    <text evidence="1">Belongs to the ROK (NagC/XylR) family. NanK subfamily.</text>
</comment>
<evidence type="ECO:0000255" key="1">
    <source>
        <dbReference type="HAMAP-Rule" id="MF_01234"/>
    </source>
</evidence>
<reference key="1">
    <citation type="submission" date="2007-08" db="EMBL/GenBank/DDBJ databases">
        <authorList>
            <consortium name="The Citrobacter koseri Genome Sequencing Project"/>
            <person name="McClelland M."/>
            <person name="Sanderson E.K."/>
            <person name="Porwollik S."/>
            <person name="Spieth J."/>
            <person name="Clifton W.S."/>
            <person name="Latreille P."/>
            <person name="Courtney L."/>
            <person name="Wang C."/>
            <person name="Pepin K."/>
            <person name="Bhonagiri V."/>
            <person name="Nash W."/>
            <person name="Johnson M."/>
            <person name="Thiruvilangam P."/>
            <person name="Wilson R."/>
        </authorList>
    </citation>
    <scope>NUCLEOTIDE SEQUENCE [LARGE SCALE GENOMIC DNA]</scope>
    <source>
        <strain>ATCC BAA-895 / CDC 4225-83 / SGSC4696</strain>
    </source>
</reference>